<gene>
    <name evidence="1" type="primary">NBP35</name>
    <name type="ordered locus">At5g50960</name>
    <name type="ORF">K3K7.12</name>
</gene>
<evidence type="ECO:0000255" key="1">
    <source>
        <dbReference type="HAMAP-Rule" id="MF_03038"/>
    </source>
</evidence>
<evidence type="ECO:0000256" key="2">
    <source>
        <dbReference type="SAM" id="MobiDB-lite"/>
    </source>
</evidence>
<evidence type="ECO:0000269" key="3">
    <source>
    </source>
</evidence>
<evidence type="ECO:0000269" key="4">
    <source>
    </source>
</evidence>
<evidence type="ECO:0000305" key="5"/>
<evidence type="ECO:0000305" key="6">
    <source>
    </source>
</evidence>
<accession>Q8H1Q2</accession>
<accession>Q9C5E1</accession>
<accession>Q9FI52</accession>
<name>NBP35_ARATH</name>
<protein>
    <recommendedName>
        <fullName evidence="1">Cytosolic Fe-S cluster assembly factor NBP35</fullName>
    </recommendedName>
    <alternativeName>
        <fullName>Nucleotide binding protein 35</fullName>
        <shortName>AtNBP35</shortName>
    </alternativeName>
</protein>
<comment type="function">
    <text evidence="1 3 4">Component of the cytosolic iron-sulfur (Fe-S) protein assembly (CIA) machinery. Required for maturation of extramitochondrial Fe-S proteins. Functions as a Fe-S scaffold, mediating the de novo assembly of an Fe-S cluster and its transfer to target apoproteins. Essential for embryo development.</text>
</comment>
<comment type="cofactor">
    <cofactor evidence="1 3 4">
        <name>[4Fe-4S] cluster</name>
        <dbReference type="ChEBI" id="CHEBI:49883"/>
    </cofactor>
    <text evidence="1 3 4">Binds 3 [4Fe-4S] clusters per homodimer. Contains two stable clusters in the N-termini and one labile, bridging cluster between subunits of the homodimer.</text>
</comment>
<comment type="subunit">
    <text evidence="1 3 4">Homodimer and homotetramer. Predominantly homodimeric.</text>
</comment>
<comment type="subcellular location">
    <subcellularLocation>
        <location evidence="1 3 4">Cytoplasm</location>
    </subcellularLocation>
</comment>
<comment type="miscellaneous">
    <text evidence="6">Although plant and algal NBP35 proteins lack the characteristic CXXC motif in the C-terminus, thought to be required for Fe-S cluster binding, they can bind a [4Fe-4S] cluster in the C-terminus. Also, in this linage, no CFD1 partner protein homolog as found in other eukaryotes can be found.</text>
</comment>
<comment type="similarity">
    <text evidence="1">Belongs to the Mrp/NBP35 ATP-binding proteins family. NUBP1/NBP35 subfamily.</text>
</comment>
<comment type="sequence caution" evidence="5">
    <conflict type="erroneous gene model prediction">
        <sequence resource="EMBL-CDS" id="BAB08742"/>
    </conflict>
</comment>
<reference key="1">
    <citation type="journal article" date="1999" name="DNA Res.">
        <title>Structural analysis of Arabidopsis thaliana chromosome 5. IX. Sequence features of the regions of 1,011,550 bp covered by seventeen P1 and TAC clones.</title>
        <authorList>
            <person name="Kaneko T."/>
            <person name="Katoh T."/>
            <person name="Sato S."/>
            <person name="Nakamura Y."/>
            <person name="Asamizu E."/>
            <person name="Kotani H."/>
            <person name="Miyajima N."/>
            <person name="Tabata S."/>
        </authorList>
    </citation>
    <scope>NUCLEOTIDE SEQUENCE [LARGE SCALE GENOMIC DNA]</scope>
    <source>
        <strain>cv. Columbia</strain>
    </source>
</reference>
<reference key="2">
    <citation type="journal article" date="2017" name="Plant J.">
        <title>Araport11: a complete reannotation of the Arabidopsis thaliana reference genome.</title>
        <authorList>
            <person name="Cheng C.Y."/>
            <person name="Krishnakumar V."/>
            <person name="Chan A.P."/>
            <person name="Thibaud-Nissen F."/>
            <person name="Schobel S."/>
            <person name="Town C.D."/>
        </authorList>
    </citation>
    <scope>GENOME REANNOTATION</scope>
    <source>
        <strain>cv. Columbia</strain>
    </source>
</reference>
<reference key="3">
    <citation type="journal article" date="2003" name="Science">
        <title>Empirical analysis of transcriptional activity in the Arabidopsis genome.</title>
        <authorList>
            <person name="Yamada K."/>
            <person name="Lim J."/>
            <person name="Dale J.M."/>
            <person name="Chen H."/>
            <person name="Shinn P."/>
            <person name="Palm C.J."/>
            <person name="Southwick A.M."/>
            <person name="Wu H.C."/>
            <person name="Kim C.J."/>
            <person name="Nguyen M."/>
            <person name="Pham P.K."/>
            <person name="Cheuk R.F."/>
            <person name="Karlin-Newmann G."/>
            <person name="Liu S.X."/>
            <person name="Lam B."/>
            <person name="Sakano H."/>
            <person name="Wu T."/>
            <person name="Yu G."/>
            <person name="Miranda M."/>
            <person name="Quach H.L."/>
            <person name="Tripp M."/>
            <person name="Chang C.H."/>
            <person name="Lee J.M."/>
            <person name="Toriumi M.J."/>
            <person name="Chan M.M."/>
            <person name="Tang C.C."/>
            <person name="Onodera C.S."/>
            <person name="Deng J.M."/>
            <person name="Akiyama K."/>
            <person name="Ansari Y."/>
            <person name="Arakawa T."/>
            <person name="Banh J."/>
            <person name="Banno F."/>
            <person name="Bowser L."/>
            <person name="Brooks S.Y."/>
            <person name="Carninci P."/>
            <person name="Chao Q."/>
            <person name="Choy N."/>
            <person name="Enju A."/>
            <person name="Goldsmith A.D."/>
            <person name="Gurjal M."/>
            <person name="Hansen N.F."/>
            <person name="Hayashizaki Y."/>
            <person name="Johnson-Hopson C."/>
            <person name="Hsuan V.W."/>
            <person name="Iida K."/>
            <person name="Karnes M."/>
            <person name="Khan S."/>
            <person name="Koesema E."/>
            <person name="Ishida J."/>
            <person name="Jiang P.X."/>
            <person name="Jones T."/>
            <person name="Kawai J."/>
            <person name="Kamiya A."/>
            <person name="Meyers C."/>
            <person name="Nakajima M."/>
            <person name="Narusaka M."/>
            <person name="Seki M."/>
            <person name="Sakurai T."/>
            <person name="Satou M."/>
            <person name="Tamse R."/>
            <person name="Vaysberg M."/>
            <person name="Wallender E.K."/>
            <person name="Wong C."/>
            <person name="Yamamura Y."/>
            <person name="Yuan S."/>
            <person name="Shinozaki K."/>
            <person name="Davis R.W."/>
            <person name="Theologis A."/>
            <person name="Ecker J.R."/>
        </authorList>
    </citation>
    <scope>NUCLEOTIDE SEQUENCE [LARGE SCALE MRNA]</scope>
    <source>
        <strain>cv. Columbia</strain>
    </source>
</reference>
<reference key="4">
    <citation type="journal article" date="2008" name="J. Biol. Chem.">
        <title>The essential cytosolic iron-sulfur protein Nbp35 acts without Cfd1 partner in the green lineage.</title>
        <authorList>
            <person name="Bych K."/>
            <person name="Netz D.J."/>
            <person name="Vigani G."/>
            <person name="Bill E."/>
            <person name="Lill R."/>
            <person name="Pierik A.J."/>
            <person name="Balk J."/>
        </authorList>
    </citation>
    <scope>FUNCTION</scope>
    <scope>COFACTOR</scope>
    <scope>SUBCELLULAR LOCATION</scope>
    <scope>SUBUNIT</scope>
</reference>
<reference key="5">
    <citation type="journal article" date="2009" name="Biochem. Biophys. Res. Commun.">
        <title>Arabidopsis cytosolic Nbp35 homodimer can assemble both [2Fe-2S] and [4Fe-4S] clusters in two distinct domains.</title>
        <authorList>
            <person name="Kohbushi H."/>
            <person name="Nakai Y."/>
            <person name="Kikuchi S."/>
            <person name="Yabe T."/>
            <person name="Hori H."/>
            <person name="Nakai M."/>
        </authorList>
    </citation>
    <scope>FUNCTION</scope>
    <scope>COFACTOR</scope>
    <scope>SUBCELLULAR LOCATION</scope>
    <scope>SUBUNIT</scope>
    <scope>MUTAGENESIS OF CYS-28; CYS-31; CYS-322 AND CYS-328</scope>
</reference>
<organism>
    <name type="scientific">Arabidopsis thaliana</name>
    <name type="common">Mouse-ear cress</name>
    <dbReference type="NCBI Taxonomy" id="3702"/>
    <lineage>
        <taxon>Eukaryota</taxon>
        <taxon>Viridiplantae</taxon>
        <taxon>Streptophyta</taxon>
        <taxon>Embryophyta</taxon>
        <taxon>Tracheophyta</taxon>
        <taxon>Spermatophyta</taxon>
        <taxon>Magnoliopsida</taxon>
        <taxon>eudicotyledons</taxon>
        <taxon>Gunneridae</taxon>
        <taxon>Pentapetalae</taxon>
        <taxon>rosids</taxon>
        <taxon>malvids</taxon>
        <taxon>Brassicales</taxon>
        <taxon>Brassicaceae</taxon>
        <taxon>Camelineae</taxon>
        <taxon>Arabidopsis</taxon>
    </lineage>
</organism>
<dbReference type="EMBL" id="AB017063">
    <property type="protein sequence ID" value="BAB08742.1"/>
    <property type="status" value="ALT_SEQ"/>
    <property type="molecule type" value="Genomic_DNA"/>
</dbReference>
<dbReference type="EMBL" id="CP002688">
    <property type="protein sequence ID" value="AED96017.1"/>
    <property type="molecule type" value="Genomic_DNA"/>
</dbReference>
<dbReference type="EMBL" id="AF360309">
    <property type="protein sequence ID" value="AAK26019.1"/>
    <property type="molecule type" value="mRNA"/>
</dbReference>
<dbReference type="EMBL" id="AY142635">
    <property type="protein sequence ID" value="AAN13093.1"/>
    <property type="molecule type" value="mRNA"/>
</dbReference>
<dbReference type="RefSeq" id="NP_568748.1">
    <property type="nucleotide sequence ID" value="NM_124475.5"/>
</dbReference>
<dbReference type="SMR" id="Q8H1Q2"/>
<dbReference type="BioGRID" id="20415">
    <property type="interactions" value="1"/>
</dbReference>
<dbReference type="FunCoup" id="Q8H1Q2">
    <property type="interactions" value="4056"/>
</dbReference>
<dbReference type="STRING" id="3702.Q8H1Q2"/>
<dbReference type="iPTMnet" id="Q8H1Q2"/>
<dbReference type="PaxDb" id="3702-AT5G50960.1"/>
<dbReference type="ProteomicsDB" id="251250"/>
<dbReference type="EnsemblPlants" id="AT5G50960.1">
    <property type="protein sequence ID" value="AT5G50960.1"/>
    <property type="gene ID" value="AT5G50960"/>
</dbReference>
<dbReference type="GeneID" id="835169"/>
<dbReference type="Gramene" id="AT5G50960.1">
    <property type="protein sequence ID" value="AT5G50960.1"/>
    <property type="gene ID" value="AT5G50960"/>
</dbReference>
<dbReference type="KEGG" id="ath:AT5G50960"/>
<dbReference type="Araport" id="AT5G50960"/>
<dbReference type="TAIR" id="AT5G50960">
    <property type="gene designation" value="NBP35"/>
</dbReference>
<dbReference type="eggNOG" id="KOG3022">
    <property type="taxonomic scope" value="Eukaryota"/>
</dbReference>
<dbReference type="HOGENOM" id="CLU_024839_0_1_1"/>
<dbReference type="InParanoid" id="Q8H1Q2"/>
<dbReference type="OMA" id="EMDCQVG"/>
<dbReference type="OrthoDB" id="1741334at2759"/>
<dbReference type="PhylomeDB" id="Q8H1Q2"/>
<dbReference type="CD-CODE" id="4299E36E">
    <property type="entry name" value="Nucleolus"/>
</dbReference>
<dbReference type="PRO" id="PR:Q8H1Q2"/>
<dbReference type="Proteomes" id="UP000006548">
    <property type="component" value="Chromosome 5"/>
</dbReference>
<dbReference type="ExpressionAtlas" id="Q8H1Q2">
    <property type="expression patterns" value="baseline and differential"/>
</dbReference>
<dbReference type="GO" id="GO:0005829">
    <property type="term" value="C:cytosol"/>
    <property type="evidence" value="ECO:0000314"/>
    <property type="project" value="TAIR"/>
</dbReference>
<dbReference type="GO" id="GO:0051539">
    <property type="term" value="F:4 iron, 4 sulfur cluster binding"/>
    <property type="evidence" value="ECO:0007669"/>
    <property type="project" value="UniProtKB-UniRule"/>
</dbReference>
<dbReference type="GO" id="GO:0005524">
    <property type="term" value="F:ATP binding"/>
    <property type="evidence" value="ECO:0007669"/>
    <property type="project" value="UniProtKB-KW"/>
</dbReference>
<dbReference type="GO" id="GO:0140663">
    <property type="term" value="F:ATP-dependent FeS chaperone activity"/>
    <property type="evidence" value="ECO:0007669"/>
    <property type="project" value="InterPro"/>
</dbReference>
<dbReference type="GO" id="GO:0051536">
    <property type="term" value="F:iron-sulfur cluster binding"/>
    <property type="evidence" value="ECO:0000315"/>
    <property type="project" value="TAIR"/>
</dbReference>
<dbReference type="GO" id="GO:0046872">
    <property type="term" value="F:metal ion binding"/>
    <property type="evidence" value="ECO:0007669"/>
    <property type="project" value="UniProtKB-KW"/>
</dbReference>
<dbReference type="GO" id="GO:0042803">
    <property type="term" value="F:protein homodimerization activity"/>
    <property type="evidence" value="ECO:0000314"/>
    <property type="project" value="TAIR"/>
</dbReference>
<dbReference type="GO" id="GO:0016226">
    <property type="term" value="P:iron-sulfur cluster assembly"/>
    <property type="evidence" value="ECO:0007669"/>
    <property type="project" value="UniProtKB-UniRule"/>
</dbReference>
<dbReference type="CDD" id="cd02037">
    <property type="entry name" value="Mrp_NBP35"/>
    <property type="match status" value="1"/>
</dbReference>
<dbReference type="Gene3D" id="3.40.50.300">
    <property type="entry name" value="P-loop containing nucleotide triphosphate hydrolases"/>
    <property type="match status" value="1"/>
</dbReference>
<dbReference type="HAMAP" id="MF_02040">
    <property type="entry name" value="Mrp_NBP35"/>
    <property type="match status" value="1"/>
</dbReference>
<dbReference type="HAMAP" id="MF_03038">
    <property type="entry name" value="NUBP1"/>
    <property type="match status" value="1"/>
</dbReference>
<dbReference type="InterPro" id="IPR000808">
    <property type="entry name" value="Mrp-like_CS"/>
</dbReference>
<dbReference type="InterPro" id="IPR019591">
    <property type="entry name" value="Mrp/NBP35_ATP-bd"/>
</dbReference>
<dbReference type="InterPro" id="IPR028601">
    <property type="entry name" value="NUBP1/Nbp35"/>
</dbReference>
<dbReference type="InterPro" id="IPR027417">
    <property type="entry name" value="P-loop_NTPase"/>
</dbReference>
<dbReference type="InterPro" id="IPR033756">
    <property type="entry name" value="YlxH/NBP35"/>
</dbReference>
<dbReference type="PANTHER" id="PTHR23264:SF19">
    <property type="entry name" value="CYTOSOLIC FE-S CLUSTER ASSEMBLY FACTOR NUBP2"/>
    <property type="match status" value="1"/>
</dbReference>
<dbReference type="PANTHER" id="PTHR23264">
    <property type="entry name" value="NUCLEOTIDE-BINDING PROTEIN NBP35 YEAST -RELATED"/>
    <property type="match status" value="1"/>
</dbReference>
<dbReference type="Pfam" id="PF10609">
    <property type="entry name" value="ParA"/>
    <property type="match status" value="2"/>
</dbReference>
<dbReference type="SUPFAM" id="SSF52540">
    <property type="entry name" value="P-loop containing nucleoside triphosphate hydrolases"/>
    <property type="match status" value="1"/>
</dbReference>
<dbReference type="PROSITE" id="PS01215">
    <property type="entry name" value="MRP"/>
    <property type="match status" value="1"/>
</dbReference>
<sequence>MENGDIPEDANEHCPGPQSESAGKSDSCAGCPNQEACATAPKGPDPDLVAIAERMSTVKHKILVLSGKGGVGKSTFSAQLSFALAGMDHQVGLMDIDICGPSIPKMLGLEGQEIHQSNLGWSPVYVEDNLGVMSIGFMLPNSDEAVIWRGPRKNGLIKQFLKDVYWGEIDYLVVDAPPGTSDEHISIVQYLLPTGIDGAIIVTTPQEVSLIDVRKEVSFCKKVGVPVLGVVENMSGLSQPLKDVKFMKLATETGSSINVTEDVIACLRKNAPELLDIVACSEVFDSSGGGAERMCREMGVPFLGKVPMDPQLCKAAEQGKSCFEDNKCLISAPALKSIIQKVVPSTVMTE</sequence>
<keyword id="KW-0004">4Fe-4S</keyword>
<keyword id="KW-0067">ATP-binding</keyword>
<keyword id="KW-0963">Cytoplasm</keyword>
<keyword id="KW-0408">Iron</keyword>
<keyword id="KW-0411">Iron-sulfur</keyword>
<keyword id="KW-0479">Metal-binding</keyword>
<keyword id="KW-0547">Nucleotide-binding</keyword>
<keyword id="KW-1185">Reference proteome</keyword>
<proteinExistence type="evidence at protein level"/>
<feature type="chain" id="PRO_0000421867" description="Cytosolic Fe-S cluster assembly factor NBP35">
    <location>
        <begin position="1"/>
        <end position="350"/>
    </location>
</feature>
<feature type="region of interest" description="Disordered" evidence="2">
    <location>
        <begin position="1"/>
        <end position="30"/>
    </location>
</feature>
<feature type="binding site" evidence="1">
    <location>
        <position position="14"/>
    </location>
    <ligand>
        <name>[4Fe-4S] cluster</name>
        <dbReference type="ChEBI" id="CHEBI:49883"/>
        <label>1</label>
    </ligand>
</feature>
<feature type="binding site" evidence="1">
    <location>
        <position position="28"/>
    </location>
    <ligand>
        <name>[4Fe-4S] cluster</name>
        <dbReference type="ChEBI" id="CHEBI:49883"/>
        <label>1</label>
    </ligand>
</feature>
<feature type="binding site" evidence="1">
    <location>
        <position position="31"/>
    </location>
    <ligand>
        <name>[4Fe-4S] cluster</name>
        <dbReference type="ChEBI" id="CHEBI:49883"/>
        <label>1</label>
    </ligand>
</feature>
<feature type="binding site" evidence="1">
    <location>
        <position position="37"/>
    </location>
    <ligand>
        <name>[4Fe-4S] cluster</name>
        <dbReference type="ChEBI" id="CHEBI:49883"/>
        <label>1</label>
    </ligand>
</feature>
<feature type="binding site" evidence="1">
    <location>
        <begin position="67"/>
        <end position="74"/>
    </location>
    <ligand>
        <name>ATP</name>
        <dbReference type="ChEBI" id="CHEBI:30616"/>
    </ligand>
</feature>
<feature type="mutagenesis site" description="Impairs [4Fe-4S] cluster binding." evidence="4">
    <original>C</original>
    <variation>G</variation>
    <location>
        <position position="28"/>
    </location>
</feature>
<feature type="mutagenesis site" description="Impairs [4Fe-4S] cluster binding." evidence="4">
    <original>C</original>
    <variation>G</variation>
    <location>
        <position position="31"/>
    </location>
</feature>
<feature type="mutagenesis site" description="Seems to promote [2Fe-2S] cluster binding in the C-terminus." evidence="4">
    <original>C</original>
    <variation>G</variation>
    <location>
        <position position="322"/>
    </location>
</feature>
<feature type="mutagenesis site" description="Seems to promote [2Fe-2S] cluster binding in the C-terminus." evidence="4">
    <original>C</original>
    <variation>G</variation>
    <location>
        <position position="328"/>
    </location>
</feature>
<feature type="sequence conflict" description="In Ref. 3; AAK26019." evidence="5" ref="3">
    <original>V</original>
    <variation>F</variation>
    <location>
        <position position="343"/>
    </location>
</feature>